<protein>
    <recommendedName>
        <fullName evidence="1">Ribosome modulation factor 1</fullName>
        <shortName evidence="1">RMF 1</shortName>
    </recommendedName>
</protein>
<comment type="function">
    <text evidence="1">During stationary phase, converts 70S ribosomes to an inactive dimeric form (100S ribosomes).</text>
</comment>
<comment type="subcellular location">
    <subcellularLocation>
        <location evidence="1">Cytoplasm</location>
    </subcellularLocation>
</comment>
<comment type="similarity">
    <text evidence="1">Belongs to the ribosome modulation factor family.</text>
</comment>
<dbReference type="EMBL" id="CP000083">
    <property type="protein sequence ID" value="AAZ27307.1"/>
    <property type="molecule type" value="Genomic_DNA"/>
</dbReference>
<dbReference type="SMR" id="Q47Z13"/>
<dbReference type="STRING" id="167879.CPS_3275"/>
<dbReference type="DNASU" id="3521563"/>
<dbReference type="KEGG" id="cps:CPS_3275"/>
<dbReference type="eggNOG" id="COG3130">
    <property type="taxonomic scope" value="Bacteria"/>
</dbReference>
<dbReference type="HOGENOM" id="CLU_203350_0_0_6"/>
<dbReference type="Proteomes" id="UP000000547">
    <property type="component" value="Chromosome"/>
</dbReference>
<dbReference type="GO" id="GO:0005737">
    <property type="term" value="C:cytoplasm"/>
    <property type="evidence" value="ECO:0007669"/>
    <property type="project" value="UniProtKB-SubCell"/>
</dbReference>
<dbReference type="GO" id="GO:0006417">
    <property type="term" value="P:regulation of translation"/>
    <property type="evidence" value="ECO:0007669"/>
    <property type="project" value="UniProtKB-UniRule"/>
</dbReference>
<dbReference type="Gene3D" id="1.10.10.620">
    <property type="entry name" value="ribosome modulation factor like domain"/>
    <property type="match status" value="1"/>
</dbReference>
<dbReference type="HAMAP" id="MF_00919">
    <property type="entry name" value="RMF"/>
    <property type="match status" value="1"/>
</dbReference>
<dbReference type="InterPro" id="IPR007040">
    <property type="entry name" value="Ribosome_modulation_factor"/>
</dbReference>
<dbReference type="InterPro" id="IPR023200">
    <property type="entry name" value="RMF_sf"/>
</dbReference>
<dbReference type="NCBIfam" id="NF011162">
    <property type="entry name" value="PRK14563.1"/>
    <property type="match status" value="1"/>
</dbReference>
<dbReference type="NCBIfam" id="NF041886">
    <property type="entry name" value="Rmf_CrpP_fam"/>
    <property type="match status" value="1"/>
</dbReference>
<dbReference type="Pfam" id="PF04957">
    <property type="entry name" value="RMF"/>
    <property type="match status" value="1"/>
</dbReference>
<gene>
    <name evidence="1" type="primary">rmf1</name>
    <name type="ordered locus">CPS_3275</name>
</gene>
<name>RMF1_COLP3</name>
<sequence length="57" mass="6717">MKRQKRDRQSRAHTRGYQAGISGRSKEHCPYQIDAIKSQWLGGWREAIEDKQQGLFK</sequence>
<organism>
    <name type="scientific">Colwellia psychrerythraea (strain 34H / ATCC BAA-681)</name>
    <name type="common">Vibrio psychroerythus</name>
    <dbReference type="NCBI Taxonomy" id="167879"/>
    <lineage>
        <taxon>Bacteria</taxon>
        <taxon>Pseudomonadati</taxon>
        <taxon>Pseudomonadota</taxon>
        <taxon>Gammaproteobacteria</taxon>
        <taxon>Alteromonadales</taxon>
        <taxon>Colwelliaceae</taxon>
        <taxon>Colwellia</taxon>
    </lineage>
</organism>
<evidence type="ECO:0000255" key="1">
    <source>
        <dbReference type="HAMAP-Rule" id="MF_00919"/>
    </source>
</evidence>
<evidence type="ECO:0000256" key="2">
    <source>
        <dbReference type="SAM" id="MobiDB-lite"/>
    </source>
</evidence>
<feature type="chain" id="PRO_0000416471" description="Ribosome modulation factor 1">
    <location>
        <begin position="1"/>
        <end position="57"/>
    </location>
</feature>
<feature type="region of interest" description="Disordered" evidence="2">
    <location>
        <begin position="1"/>
        <end position="24"/>
    </location>
</feature>
<feature type="compositionally biased region" description="Basic residues" evidence="2">
    <location>
        <begin position="1"/>
        <end position="14"/>
    </location>
</feature>
<proteinExistence type="inferred from homology"/>
<accession>Q47Z13</accession>
<keyword id="KW-0963">Cytoplasm</keyword>
<keyword id="KW-0810">Translation regulation</keyword>
<reference key="1">
    <citation type="journal article" date="2005" name="Proc. Natl. Acad. Sci. U.S.A.">
        <title>The psychrophilic lifestyle as revealed by the genome sequence of Colwellia psychrerythraea 34H through genomic and proteomic analyses.</title>
        <authorList>
            <person name="Methe B.A."/>
            <person name="Nelson K.E."/>
            <person name="Deming J.W."/>
            <person name="Momen B."/>
            <person name="Melamud E."/>
            <person name="Zhang X."/>
            <person name="Moult J."/>
            <person name="Madupu R."/>
            <person name="Nelson W.C."/>
            <person name="Dodson R.J."/>
            <person name="Brinkac L.M."/>
            <person name="Daugherty S.C."/>
            <person name="Durkin A.S."/>
            <person name="DeBoy R.T."/>
            <person name="Kolonay J.F."/>
            <person name="Sullivan S.A."/>
            <person name="Zhou L."/>
            <person name="Davidsen T.M."/>
            <person name="Wu M."/>
            <person name="Huston A.L."/>
            <person name="Lewis M."/>
            <person name="Weaver B."/>
            <person name="Weidman J.F."/>
            <person name="Khouri H."/>
            <person name="Utterback T.R."/>
            <person name="Feldblyum T.V."/>
            <person name="Fraser C.M."/>
        </authorList>
    </citation>
    <scope>NUCLEOTIDE SEQUENCE [LARGE SCALE GENOMIC DNA]</scope>
    <source>
        <strain>34H / ATCC BAA-681</strain>
    </source>
</reference>